<gene>
    <name evidence="1" type="primary">rpsN</name>
    <name type="ordered locus">NTHI0954</name>
</gene>
<feature type="chain" id="PRO_1000128415" description="Small ribosomal subunit protein uS14">
    <location>
        <begin position="1"/>
        <end position="101"/>
    </location>
</feature>
<name>RS14_HAEI8</name>
<proteinExistence type="inferred from homology"/>
<reference key="1">
    <citation type="journal article" date="2005" name="J. Bacteriol.">
        <title>Genomic sequence of an otitis media isolate of nontypeable Haemophilus influenzae: comparative study with H. influenzae serotype d, strain KW20.</title>
        <authorList>
            <person name="Harrison A."/>
            <person name="Dyer D.W."/>
            <person name="Gillaspy A."/>
            <person name="Ray W.C."/>
            <person name="Mungur R."/>
            <person name="Carson M.B."/>
            <person name="Zhong H."/>
            <person name="Gipson J."/>
            <person name="Gipson M."/>
            <person name="Johnson L.S."/>
            <person name="Lewis L."/>
            <person name="Bakaletz L.O."/>
            <person name="Munson R.S. Jr."/>
        </authorList>
    </citation>
    <scope>NUCLEOTIDE SEQUENCE [LARGE SCALE GENOMIC DNA]</scope>
    <source>
        <strain>86-028NP</strain>
    </source>
</reference>
<organism>
    <name type="scientific">Haemophilus influenzae (strain 86-028NP)</name>
    <dbReference type="NCBI Taxonomy" id="281310"/>
    <lineage>
        <taxon>Bacteria</taxon>
        <taxon>Pseudomonadati</taxon>
        <taxon>Pseudomonadota</taxon>
        <taxon>Gammaproteobacteria</taxon>
        <taxon>Pasteurellales</taxon>
        <taxon>Pasteurellaceae</taxon>
        <taxon>Haemophilus</taxon>
    </lineage>
</organism>
<protein>
    <recommendedName>
        <fullName evidence="1">Small ribosomal subunit protein uS14</fullName>
    </recommendedName>
    <alternativeName>
        <fullName evidence="2">30S ribosomal protein S14</fullName>
    </alternativeName>
</protein>
<evidence type="ECO:0000255" key="1">
    <source>
        <dbReference type="HAMAP-Rule" id="MF_00537"/>
    </source>
</evidence>
<evidence type="ECO:0000305" key="2"/>
<dbReference type="EMBL" id="CP000057">
    <property type="protein sequence ID" value="AAX87839.1"/>
    <property type="molecule type" value="Genomic_DNA"/>
</dbReference>
<dbReference type="RefSeq" id="WP_005625879.1">
    <property type="nucleotide sequence ID" value="NC_007146.2"/>
</dbReference>
<dbReference type="SMR" id="Q4QMA8"/>
<dbReference type="GeneID" id="93219831"/>
<dbReference type="KEGG" id="hit:NTHI0954"/>
<dbReference type="HOGENOM" id="CLU_139869_0_1_6"/>
<dbReference type="Proteomes" id="UP000002525">
    <property type="component" value="Chromosome"/>
</dbReference>
<dbReference type="GO" id="GO:0005737">
    <property type="term" value="C:cytoplasm"/>
    <property type="evidence" value="ECO:0007669"/>
    <property type="project" value="UniProtKB-ARBA"/>
</dbReference>
<dbReference type="GO" id="GO:0015935">
    <property type="term" value="C:small ribosomal subunit"/>
    <property type="evidence" value="ECO:0007669"/>
    <property type="project" value="TreeGrafter"/>
</dbReference>
<dbReference type="GO" id="GO:0019843">
    <property type="term" value="F:rRNA binding"/>
    <property type="evidence" value="ECO:0007669"/>
    <property type="project" value="UniProtKB-UniRule"/>
</dbReference>
<dbReference type="GO" id="GO:0003735">
    <property type="term" value="F:structural constituent of ribosome"/>
    <property type="evidence" value="ECO:0007669"/>
    <property type="project" value="InterPro"/>
</dbReference>
<dbReference type="GO" id="GO:0006412">
    <property type="term" value="P:translation"/>
    <property type="evidence" value="ECO:0007669"/>
    <property type="project" value="UniProtKB-UniRule"/>
</dbReference>
<dbReference type="FunFam" id="1.10.287.1480:FF:000001">
    <property type="entry name" value="30S ribosomal protein S14"/>
    <property type="match status" value="1"/>
</dbReference>
<dbReference type="Gene3D" id="1.10.287.1480">
    <property type="match status" value="1"/>
</dbReference>
<dbReference type="HAMAP" id="MF_00537">
    <property type="entry name" value="Ribosomal_uS14_1"/>
    <property type="match status" value="1"/>
</dbReference>
<dbReference type="InterPro" id="IPR001209">
    <property type="entry name" value="Ribosomal_uS14"/>
</dbReference>
<dbReference type="InterPro" id="IPR023036">
    <property type="entry name" value="Ribosomal_uS14_bac/plastid"/>
</dbReference>
<dbReference type="InterPro" id="IPR018271">
    <property type="entry name" value="Ribosomal_uS14_CS"/>
</dbReference>
<dbReference type="NCBIfam" id="NF006477">
    <property type="entry name" value="PRK08881.1"/>
    <property type="match status" value="1"/>
</dbReference>
<dbReference type="PANTHER" id="PTHR19836">
    <property type="entry name" value="30S RIBOSOMAL PROTEIN S14"/>
    <property type="match status" value="1"/>
</dbReference>
<dbReference type="PANTHER" id="PTHR19836:SF19">
    <property type="entry name" value="SMALL RIBOSOMAL SUBUNIT PROTEIN US14M"/>
    <property type="match status" value="1"/>
</dbReference>
<dbReference type="Pfam" id="PF00253">
    <property type="entry name" value="Ribosomal_S14"/>
    <property type="match status" value="1"/>
</dbReference>
<dbReference type="SUPFAM" id="SSF57716">
    <property type="entry name" value="Glucocorticoid receptor-like (DNA-binding domain)"/>
    <property type="match status" value="1"/>
</dbReference>
<dbReference type="PROSITE" id="PS00527">
    <property type="entry name" value="RIBOSOMAL_S14"/>
    <property type="match status" value="1"/>
</dbReference>
<keyword id="KW-0687">Ribonucleoprotein</keyword>
<keyword id="KW-0689">Ribosomal protein</keyword>
<keyword id="KW-0694">RNA-binding</keyword>
<keyword id="KW-0699">rRNA-binding</keyword>
<accession>Q4QMA8</accession>
<comment type="function">
    <text evidence="1">Binds 16S rRNA, required for the assembly of 30S particles and may also be responsible for determining the conformation of the 16S rRNA at the A site.</text>
</comment>
<comment type="subunit">
    <text evidence="1">Part of the 30S ribosomal subunit. Contacts proteins S3 and S10.</text>
</comment>
<comment type="similarity">
    <text evidence="1">Belongs to the universal ribosomal protein uS14 family.</text>
</comment>
<sequence length="101" mass="11676">MAKQSMKARDVKRVKLAEKFYAKRVELKKIISDVNASDEDRWDAVLKLQTLPRDSSPSRQRNRCRQTGRPHGVLRKFGLSRIKVREAAMRGEIPGLKKASW</sequence>